<dbReference type="EC" id="3.1.1.4"/>
<dbReference type="EMBL" id="AY862399">
    <property type="protein sequence ID" value="AAW65725.1"/>
    <property type="molecule type" value="mRNA"/>
</dbReference>
<dbReference type="PDB" id="1Y75">
    <property type="method" value="X-ray"/>
    <property type="resolution" value="2.30 A"/>
    <property type="chains" value="A=8-125"/>
</dbReference>
<dbReference type="PDBsum" id="1Y75"/>
<dbReference type="SMR" id="Q5G291"/>
<dbReference type="EvolutionaryTrace" id="Q5G291"/>
<dbReference type="GO" id="GO:0005576">
    <property type="term" value="C:extracellular region"/>
    <property type="evidence" value="ECO:0007669"/>
    <property type="project" value="UniProtKB-SubCell"/>
</dbReference>
<dbReference type="GO" id="GO:0005509">
    <property type="term" value="F:calcium ion binding"/>
    <property type="evidence" value="ECO:0007669"/>
    <property type="project" value="InterPro"/>
</dbReference>
<dbReference type="GO" id="GO:0047498">
    <property type="term" value="F:calcium-dependent phospholipase A2 activity"/>
    <property type="evidence" value="ECO:0007669"/>
    <property type="project" value="TreeGrafter"/>
</dbReference>
<dbReference type="GO" id="GO:0005543">
    <property type="term" value="F:phospholipid binding"/>
    <property type="evidence" value="ECO:0007669"/>
    <property type="project" value="TreeGrafter"/>
</dbReference>
<dbReference type="GO" id="GO:0005102">
    <property type="term" value="F:signaling receptor binding"/>
    <property type="evidence" value="ECO:0007669"/>
    <property type="project" value="TreeGrafter"/>
</dbReference>
<dbReference type="GO" id="GO:0050482">
    <property type="term" value="P:arachidonate secretion"/>
    <property type="evidence" value="ECO:0007669"/>
    <property type="project" value="InterPro"/>
</dbReference>
<dbReference type="GO" id="GO:0006633">
    <property type="term" value="P:fatty acid biosynthetic process"/>
    <property type="evidence" value="ECO:0007669"/>
    <property type="project" value="TreeGrafter"/>
</dbReference>
<dbReference type="GO" id="GO:0016042">
    <property type="term" value="P:lipid catabolic process"/>
    <property type="evidence" value="ECO:0007669"/>
    <property type="project" value="UniProtKB-KW"/>
</dbReference>
<dbReference type="GO" id="GO:0006644">
    <property type="term" value="P:phospholipid metabolic process"/>
    <property type="evidence" value="ECO:0007669"/>
    <property type="project" value="InterPro"/>
</dbReference>
<dbReference type="GO" id="GO:0048146">
    <property type="term" value="P:positive regulation of fibroblast proliferation"/>
    <property type="evidence" value="ECO:0007669"/>
    <property type="project" value="TreeGrafter"/>
</dbReference>
<dbReference type="CDD" id="cd00125">
    <property type="entry name" value="PLA2c"/>
    <property type="match status" value="1"/>
</dbReference>
<dbReference type="FunFam" id="1.20.90.10:FF:000007">
    <property type="entry name" value="Acidic phospholipase A2"/>
    <property type="match status" value="1"/>
</dbReference>
<dbReference type="Gene3D" id="1.20.90.10">
    <property type="entry name" value="Phospholipase A2 domain"/>
    <property type="match status" value="1"/>
</dbReference>
<dbReference type="InterPro" id="IPR001211">
    <property type="entry name" value="PLipase_A2"/>
</dbReference>
<dbReference type="InterPro" id="IPR016090">
    <property type="entry name" value="PLipase_A2_dom"/>
</dbReference>
<dbReference type="InterPro" id="IPR036444">
    <property type="entry name" value="PLipase_A2_dom_sf"/>
</dbReference>
<dbReference type="InterPro" id="IPR033113">
    <property type="entry name" value="PLipase_A2_His_AS"/>
</dbReference>
<dbReference type="PANTHER" id="PTHR11716:SF94">
    <property type="entry name" value="PHOSPHOLIPASE A2"/>
    <property type="match status" value="1"/>
</dbReference>
<dbReference type="PANTHER" id="PTHR11716">
    <property type="entry name" value="PHOSPHOLIPASE A2 FAMILY MEMBER"/>
    <property type="match status" value="1"/>
</dbReference>
<dbReference type="Pfam" id="PF00068">
    <property type="entry name" value="Phospholip_A2_1"/>
    <property type="match status" value="1"/>
</dbReference>
<dbReference type="PRINTS" id="PR00389">
    <property type="entry name" value="PHPHLIPASEA2"/>
</dbReference>
<dbReference type="SMART" id="SM00085">
    <property type="entry name" value="PA2c"/>
    <property type="match status" value="1"/>
</dbReference>
<dbReference type="SUPFAM" id="SSF48619">
    <property type="entry name" value="Phospholipase A2, PLA2"/>
    <property type="match status" value="1"/>
</dbReference>
<dbReference type="PROSITE" id="PS00118">
    <property type="entry name" value="PA2_HIS"/>
    <property type="match status" value="1"/>
</dbReference>
<feature type="signal peptide" evidence="3">
    <location>
        <begin position="1" status="less than"/>
        <end position="1"/>
    </location>
</feature>
<feature type="propeptide" id="PRO_0000346752" evidence="1">
    <location>
        <begin position="2"/>
        <end position="7"/>
    </location>
</feature>
<feature type="chain" id="PRO_5000094846" description="Acidic phospholipase A2 5">
    <location>
        <begin position="8"/>
        <end position="125"/>
    </location>
</feature>
<feature type="active site" evidence="2">
    <location>
        <position position="53"/>
    </location>
</feature>
<feature type="active site" evidence="2">
    <location>
        <position position="99"/>
    </location>
</feature>
<feature type="binding site" evidence="5 7">
    <location>
        <position position="28"/>
    </location>
    <ligand>
        <name>N-acetyl-beta-D-glucosamine</name>
        <dbReference type="ChEBI" id="CHEBI:28009"/>
    </ligand>
</feature>
<feature type="binding site" evidence="5 7">
    <location>
        <position position="30"/>
    </location>
    <ligand>
        <name>Zn(2+)</name>
        <dbReference type="ChEBI" id="CHEBI:29105"/>
        <label>1</label>
        <note>ligand shared between dimeric partners</note>
    </ligand>
</feature>
<feature type="binding site" evidence="2">
    <location>
        <position position="34"/>
    </location>
    <ligand>
        <name>Ca(2+)</name>
        <dbReference type="ChEBI" id="CHEBI:29108"/>
    </ligand>
</feature>
<feature type="binding site" evidence="2">
    <location>
        <position position="36"/>
    </location>
    <ligand>
        <name>Ca(2+)</name>
        <dbReference type="ChEBI" id="CHEBI:29108"/>
    </ligand>
</feature>
<feature type="binding site" evidence="5 7">
    <location>
        <position position="53"/>
    </location>
    <ligand>
        <name>N-acetyl-beta-D-glucosamine</name>
        <dbReference type="ChEBI" id="CHEBI:28009"/>
    </ligand>
</feature>
<feature type="binding site" evidence="5 7">
    <location>
        <position position="69"/>
    </location>
    <ligand>
        <name>N-acetyl-beta-D-glucosamine</name>
        <dbReference type="ChEBI" id="CHEBI:28009"/>
    </ligand>
</feature>
<feature type="binding site" evidence="5 7">
    <location>
        <position position="76"/>
    </location>
    <ligand>
        <name>Zn(2+)</name>
        <dbReference type="ChEBI" id="CHEBI:29105"/>
        <label>2</label>
    </ligand>
</feature>
<feature type="binding site">
    <location>
        <position position="117"/>
    </location>
    <ligand>
        <name>Zn(2+)</name>
        <dbReference type="ChEBI" id="CHEBI:29105"/>
        <label>1</label>
        <note>ligand shared between dimeric partners</note>
    </ligand>
</feature>
<feature type="disulfide bond" evidence="5 7">
    <location>
        <begin position="18"/>
        <end position="77"/>
    </location>
</feature>
<feature type="disulfide bond" evidence="5 7">
    <location>
        <begin position="33"/>
        <end position="124"/>
    </location>
</feature>
<feature type="disulfide bond" evidence="5 7">
    <location>
        <begin position="35"/>
        <end position="50"/>
    </location>
</feature>
<feature type="disulfide bond" evidence="5 7">
    <location>
        <begin position="37"/>
        <end position="54"/>
    </location>
</feature>
<feature type="disulfide bond" evidence="5 7">
    <location>
        <begin position="49"/>
        <end position="105"/>
    </location>
</feature>
<feature type="disulfide bond" evidence="5 7">
    <location>
        <begin position="56"/>
        <end position="98"/>
    </location>
</feature>
<feature type="disulfide bond" evidence="5 7">
    <location>
        <begin position="66"/>
        <end position="91"/>
    </location>
</feature>
<feature type="disulfide bond" evidence="5 7">
    <location>
        <begin position="84"/>
        <end position="96"/>
    </location>
</feature>
<feature type="non-terminal residue">
    <location>
        <position position="1"/>
    </location>
</feature>
<feature type="helix" evidence="8">
    <location>
        <begin position="9"/>
        <end position="19"/>
    </location>
</feature>
<feature type="helix" evidence="8">
    <location>
        <begin position="25"/>
        <end position="28"/>
    </location>
</feature>
<feature type="strand" evidence="8">
    <location>
        <begin position="29"/>
        <end position="31"/>
    </location>
</feature>
<feature type="turn" evidence="8">
    <location>
        <begin position="32"/>
        <end position="34"/>
    </location>
</feature>
<feature type="helix" evidence="8">
    <location>
        <begin position="45"/>
        <end position="60"/>
    </location>
</feature>
<feature type="turn" evidence="8">
    <location>
        <begin position="68"/>
        <end position="70"/>
    </location>
</feature>
<feature type="strand" evidence="8">
    <location>
        <begin position="75"/>
        <end position="78"/>
    </location>
</feature>
<feature type="strand" evidence="8">
    <location>
        <begin position="81"/>
        <end position="84"/>
    </location>
</feature>
<feature type="helix" evidence="8">
    <location>
        <begin position="90"/>
        <end position="108"/>
    </location>
</feature>
<feature type="helix" evidence="8">
    <location>
        <begin position="113"/>
        <end position="115"/>
    </location>
</feature>
<feature type="helix" evidence="8">
    <location>
        <begin position="120"/>
        <end position="123"/>
    </location>
</feature>
<accession>Q5G291</accession>
<name>PA2A5_NAJSG</name>
<keyword id="KW-0002">3D-structure</keyword>
<keyword id="KW-0106">Calcium</keyword>
<keyword id="KW-1015">Disulfide bond</keyword>
<keyword id="KW-0378">Hydrolase</keyword>
<keyword id="KW-0442">Lipid degradation</keyword>
<keyword id="KW-0443">Lipid metabolism</keyword>
<keyword id="KW-0479">Metal-binding</keyword>
<keyword id="KW-0964">Secreted</keyword>
<keyword id="KW-0732">Signal</keyword>
<keyword id="KW-0862">Zinc</keyword>
<protein>
    <recommendedName>
        <fullName>Acidic phospholipase A2 5</fullName>
        <shortName>svPLA2</shortName>
        <ecNumber>3.1.1.4</ecNumber>
    </recommendedName>
    <alternativeName>
        <fullName>Phosphatidylcholine 2-acylhydrolase</fullName>
    </alternativeName>
</protein>
<proteinExistence type="evidence at protein level"/>
<sequence length="125" mass="13857">SNRPMPLNTYQFRNMIQCTVPSRSWWDFADYGCYCGCGSGTPVDDLDRCCQVHCNCYRQAGEISGCRPKFKTYTYECSGGTLTCKGDNNACAASSCDCDRLAAICFAGAPYNDNNYNIDLKARCN</sequence>
<organism>
    <name type="scientific">Naja sagittifera</name>
    <name type="common">Andaman cobra</name>
    <dbReference type="NCBI Taxonomy" id="195058"/>
    <lineage>
        <taxon>Eukaryota</taxon>
        <taxon>Metazoa</taxon>
        <taxon>Chordata</taxon>
        <taxon>Craniata</taxon>
        <taxon>Vertebrata</taxon>
        <taxon>Euteleostomi</taxon>
        <taxon>Lepidosauria</taxon>
        <taxon>Squamata</taxon>
        <taxon>Bifurcata</taxon>
        <taxon>Unidentata</taxon>
        <taxon>Episquamata</taxon>
        <taxon>Toxicofera</taxon>
        <taxon>Serpentes</taxon>
        <taxon>Colubroidea</taxon>
        <taxon>Elapidae</taxon>
        <taxon>Elapinae</taxon>
        <taxon>Naja</taxon>
    </lineage>
</organism>
<reference key="1">
    <citation type="journal article" date="2006" name="Proteins">
        <title>Crystal structure of a heterodimer of phospholipase A2 from Naja naja sagittifera at 2.3 A resolution reveals the presence of a new PLA2-like protein with a novel Cys 32-Cys 49 disulphide bridge with a bound sugar at the substrate-binding site.</title>
        <authorList>
            <person name="Jabeen T."/>
            <person name="Singh N."/>
            <person name="Singh R.K."/>
            <person name="Jasti J."/>
            <person name="Sharma S."/>
            <person name="Kaur P."/>
            <person name="Srinivasan A."/>
            <person name="Singh T.P."/>
        </authorList>
    </citation>
    <scope>NUCLEOTIDE SEQUENCE [MRNA]</scope>
    <scope>X-RAY CRYSTALLOGRAPHY (2.3 ANGSTROMS) OF 8-125 IN COMPLEX WITH CARBOHYDRATE</scope>
    <scope>MASS SPECTROMETRY</scope>
    <scope>SUBUNIT</scope>
    <scope>DISULFIDE BONDS</scope>
    <source>
        <tissue>Venom</tissue>
        <tissue>Venom gland</tissue>
    </source>
</reference>
<evidence type="ECO:0000250" key="1"/>
<evidence type="ECO:0000250" key="2">
    <source>
        <dbReference type="UniProtKB" id="Q6T179"/>
    </source>
</evidence>
<evidence type="ECO:0000255" key="3"/>
<evidence type="ECO:0000255" key="4">
    <source>
        <dbReference type="PROSITE-ProRule" id="PRU10035"/>
    </source>
</evidence>
<evidence type="ECO:0000269" key="5">
    <source>
    </source>
</evidence>
<evidence type="ECO:0000305" key="6"/>
<evidence type="ECO:0007744" key="7">
    <source>
        <dbReference type="PDB" id="1Y75"/>
    </source>
</evidence>
<evidence type="ECO:0007829" key="8">
    <source>
        <dbReference type="PDB" id="1Y75"/>
    </source>
</evidence>
<comment type="function">
    <text evidence="1">PLA2 catalyzes the calcium-dependent hydrolysis of the 2-acyl groups in 3-sn-phosphoglycerides.</text>
</comment>
<comment type="catalytic activity">
    <reaction evidence="4">
        <text>a 1,2-diacyl-sn-glycero-3-phosphocholine + H2O = a 1-acyl-sn-glycero-3-phosphocholine + a fatty acid + H(+)</text>
        <dbReference type="Rhea" id="RHEA:15801"/>
        <dbReference type="ChEBI" id="CHEBI:15377"/>
        <dbReference type="ChEBI" id="CHEBI:15378"/>
        <dbReference type="ChEBI" id="CHEBI:28868"/>
        <dbReference type="ChEBI" id="CHEBI:57643"/>
        <dbReference type="ChEBI" id="CHEBI:58168"/>
        <dbReference type="EC" id="3.1.1.4"/>
    </reaction>
</comment>
<comment type="cofactor">
    <cofactor evidence="2">
        <name>Ca(2+)</name>
        <dbReference type="ChEBI" id="CHEBI:29108"/>
    </cofactor>
    <text evidence="2">Binds 1 Ca(2+) ion.</text>
</comment>
<comment type="subunit">
    <text evidence="5">Heterodimer formed between isoform 5 and isoform 6 in presence of zinc ion and monomer in absence of zinc ion.</text>
</comment>
<comment type="subcellular location">
    <subcellularLocation>
        <location>Secreted</location>
    </subcellularLocation>
</comment>
<comment type="tissue specificity">
    <text>Expressed by the venom gland.</text>
</comment>
<comment type="mass spectrometry" mass="13282.8" method="MALDI" evidence="5"/>
<comment type="similarity">
    <text evidence="6">Belongs to the phospholipase A2 family. Group I subfamily. C49 sub-subfamily.</text>
</comment>
<comment type="caution">
    <text evidence="6">Contains two extra cysteines at two highly conserved sites. Cys-37 and Cys-54 replaces the conventional calcium-binding Gly-32 and Asp-49 respectively.</text>
</comment>